<sequence>MNELSVNDAFDDIEIESFDFIWEEWEEYKGDVPLWQHIFCGSIAGLMEHVFMYPLDTLKTYFQTNGHMKYNMIYDNCNTINNNNNNIYRGNNSSYKNTCDKNYKDMNNHRNMQTFKRNFCSSTNCDKCIINNFCKYKTNCYNVMAALHTKNNRYIHNIAEPLKNMANYKINTTNNNNVNNIINNNNNNNKKKSRNIFSYPSHTKQYRNVTYVVNKKMQQNLFNNYISNKCINDPFCCRTKTNVLNMKKDIHKFCHLSKEKYNNVFYQNDTYHPNIYGRKRKTLCRNKNNINLFKNHVHKKYCHSLDDQICHSKIKEDMRNLQNFKNYTCAKNMKRHLYSTVPFFNLKNKGNKNITLPYKEIRSKYILKNGYKSMYQRNAGYYKNLIKMQSAKKNRHQLLALRKCLMSEKKYTIIKNEPFIIRKKKNMRNEYFIGNMKGRCIINTSLNSYTLKRNCLDYHHFVNNLKNICYSIMNICYNIKNTILINPSLPINNNNNNNNNTKMDTFIKLINKCLYNNNAHKIDHKILLSNYLNLFKHTNYSYYYILNNFLKNNAPCTSRKNEWNIFSNFINVLKNKIITNNVDYIRNPNVRRNQILRNNYLYSFLRNYNKNLKRNTHMILNKLTSFKYSIPYIKNKYSNVLINNINTNNNTYSNRNVLNSIRYNNIYKNIMHPIFFPGYYNTIHFRYYNYFSRIIDDKDKGKNKNIINISTKRNNCSSIIRNNLSNLYKGVNVVVLGCIPAHALYFSTFEYSKKYFSRMTSNNSSLKMNNRNISTVSNDIKSEKSNFKLYDLNYFSIAVSGFLATLVHDLIITPIDTLKQRIQLGINKNSKDSLKLLKQNGIRSLYLSLPITLLMNIPYQIIMICTNEKMKKIYFEYICGLNTQNNKKNMENKVIDKVHDETRNQDNIGKDIKNDTYNMDKNGTFLRNQEMINKENRIYNSGALEKHVTSQEKEDKILQSVKQENVSSNNDIVNFYEGQSIYNNDAHNIIRDDINKMTHKNLENNIDNTINSNESDVNRIDNMTNDMNKECDIFSINKNNNSTVLYDQIMKRLEMNSSNKNFSLNFHDKIIRQESSPFEKENYNMNLKNIWIDNYKNDFFNKPFNHITSYFVCAGIGGGIAAVLTNPLDVIKTRIQTECFQTKGFNFFRIVSNIYYREGMRSFFKGSLARMALCIPASAVSWGTYETMKRFFKINFNTT</sequence>
<name>MFRN_PLAF7</name>
<accession>Q8I397</accession>
<keyword id="KW-0325">Glycoprotein</keyword>
<keyword id="KW-0406">Ion transport</keyword>
<keyword id="KW-0408">Iron</keyword>
<keyword id="KW-0410">Iron transport</keyword>
<keyword id="KW-0472">Membrane</keyword>
<keyword id="KW-0496">Mitochondrion</keyword>
<keyword id="KW-1185">Reference proteome</keyword>
<keyword id="KW-0677">Repeat</keyword>
<keyword id="KW-0812">Transmembrane</keyword>
<keyword id="KW-1133">Transmembrane helix</keyword>
<keyword id="KW-0813">Transport</keyword>
<gene>
    <name evidence="7" type="ORF">PF3D7_0905200</name>
</gene>
<organism evidence="8">
    <name type="scientific">Plasmodium falciparum (isolate 3D7)</name>
    <dbReference type="NCBI Taxonomy" id="36329"/>
    <lineage>
        <taxon>Eukaryota</taxon>
        <taxon>Sar</taxon>
        <taxon>Alveolata</taxon>
        <taxon>Apicomplexa</taxon>
        <taxon>Aconoidasida</taxon>
        <taxon>Haemosporida</taxon>
        <taxon>Plasmodiidae</taxon>
        <taxon>Plasmodium</taxon>
        <taxon>Plasmodium (Laverania)</taxon>
    </lineage>
</organism>
<protein>
    <recommendedName>
        <fullName evidence="6">Putative mitoferrin</fullName>
        <shortName evidence="5">PfMFRN</shortName>
    </recommendedName>
    <alternativeName>
        <fullName evidence="5">Mitochondrial carrier protein MRS3</fullName>
        <shortName evidence="5">PfMRS3</shortName>
    </alternativeName>
</protein>
<reference evidence="8" key="1">
    <citation type="journal article" date="2002" name="Nature">
        <title>Genome sequence of the human malaria parasite Plasmodium falciparum.</title>
        <authorList>
            <person name="Gardner M.J."/>
            <person name="Hall N."/>
            <person name="Fung E."/>
            <person name="White O."/>
            <person name="Berriman M."/>
            <person name="Hyman R.W."/>
            <person name="Carlton J.M."/>
            <person name="Pain A."/>
            <person name="Nelson K.E."/>
            <person name="Bowman S."/>
            <person name="Paulsen I.T."/>
            <person name="James K.D."/>
            <person name="Eisen J.A."/>
            <person name="Rutherford K.M."/>
            <person name="Salzberg S.L."/>
            <person name="Craig A."/>
            <person name="Kyes S."/>
            <person name="Chan M.-S."/>
            <person name="Nene V."/>
            <person name="Shallom S.J."/>
            <person name="Suh B."/>
            <person name="Peterson J."/>
            <person name="Angiuoli S."/>
            <person name="Pertea M."/>
            <person name="Allen J."/>
            <person name="Selengut J."/>
            <person name="Haft D."/>
            <person name="Mather M.W."/>
            <person name="Vaidya A.B."/>
            <person name="Martin D.M.A."/>
            <person name="Fairlamb A.H."/>
            <person name="Fraunholz M.J."/>
            <person name="Roos D.S."/>
            <person name="Ralph S.A."/>
            <person name="McFadden G.I."/>
            <person name="Cummings L.M."/>
            <person name="Subramanian G.M."/>
            <person name="Mungall C."/>
            <person name="Venter J.C."/>
            <person name="Carucci D.J."/>
            <person name="Hoffman S.L."/>
            <person name="Newbold C."/>
            <person name="Davis R.W."/>
            <person name="Fraser C.M."/>
            <person name="Barrell B.G."/>
        </authorList>
    </citation>
    <scope>NUCLEOTIDE SEQUENCE [LARGE SCALE GENOMIC DNA]</scope>
    <source>
        <strain evidence="8">3D7</strain>
    </source>
</reference>
<reference evidence="8" key="2">
    <citation type="journal article" date="2002" name="Nature">
        <title>Sequence of Plasmodium falciparum chromosomes 1, 3-9 and 13.</title>
        <authorList>
            <person name="Hall N."/>
            <person name="Pain A."/>
            <person name="Berriman M."/>
            <person name="Churcher C.M."/>
            <person name="Harris B."/>
            <person name="Harris D."/>
            <person name="Mungall K.L."/>
            <person name="Bowman S."/>
            <person name="Atkin R."/>
            <person name="Baker S."/>
            <person name="Barron A."/>
            <person name="Brooks K."/>
            <person name="Buckee C.O."/>
            <person name="Burrows C."/>
            <person name="Cherevach I."/>
            <person name="Chillingworth C."/>
            <person name="Chillingworth T."/>
            <person name="Christodoulou Z."/>
            <person name="Clark L."/>
            <person name="Clark R."/>
            <person name="Corton C."/>
            <person name="Cronin A."/>
            <person name="Davies R.M."/>
            <person name="Davis P."/>
            <person name="Dear P."/>
            <person name="Dearden F."/>
            <person name="Doggett J."/>
            <person name="Feltwell T."/>
            <person name="Goble A."/>
            <person name="Goodhead I."/>
            <person name="Gwilliam R."/>
            <person name="Hamlin N."/>
            <person name="Hance Z."/>
            <person name="Harper D."/>
            <person name="Hauser H."/>
            <person name="Hornsby T."/>
            <person name="Holroyd S."/>
            <person name="Horrocks P."/>
            <person name="Humphray S."/>
            <person name="Jagels K."/>
            <person name="James K.D."/>
            <person name="Johnson D."/>
            <person name="Kerhornou A."/>
            <person name="Knights A."/>
            <person name="Konfortov B."/>
            <person name="Kyes S."/>
            <person name="Larke N."/>
            <person name="Lawson D."/>
            <person name="Lennard N."/>
            <person name="Line A."/>
            <person name="Maddison M."/>
            <person name="Mclean J."/>
            <person name="Mooney P."/>
            <person name="Moule S."/>
            <person name="Murphy L."/>
            <person name="Oliver K."/>
            <person name="Ormond D."/>
            <person name="Price C."/>
            <person name="Quail M.A."/>
            <person name="Rabbinowitsch E."/>
            <person name="Rajandream M.A."/>
            <person name="Rutter S."/>
            <person name="Rutherford K.M."/>
            <person name="Sanders M."/>
            <person name="Simmonds M."/>
            <person name="Seeger K."/>
            <person name="Sharp S."/>
            <person name="Smith R."/>
            <person name="Squares R."/>
            <person name="Squares S."/>
            <person name="Stevens K."/>
            <person name="Taylor K."/>
            <person name="Tivey A."/>
            <person name="Unwin L."/>
            <person name="Whitehead S."/>
            <person name="Woodward J.R."/>
            <person name="Sulston J.E."/>
            <person name="Craig A."/>
            <person name="Newbold C."/>
            <person name="Barrell B.G."/>
        </authorList>
    </citation>
    <scope>NUCLEOTIDE SEQUENCE [LARGE SCALE GENOMIC DNA]</scope>
    <source>
        <strain evidence="8">3D7</strain>
    </source>
</reference>
<reference evidence="6" key="3">
    <citation type="journal article" date="2024" name="Front. Cell. Infect. Microbiol.">
        <title>Iron transport pathways in the human malaria parasite Plasmodium falciparum revealed by RNA-sequencing.</title>
        <authorList>
            <person name="Wunderlich J."/>
            <person name="Kotov V."/>
            <person name="Votborg-Novel L."/>
            <person name="Ntalla C."/>
            <person name="Geffken M."/>
            <person name="Peine S."/>
            <person name="Portugal S."/>
            <person name="Strauss J."/>
        </authorList>
    </citation>
    <scope>FUNCTION</scope>
    <scope>SUBCELLULAR LOCATION</scope>
    <scope>DEVELOPMENTAL STAGE</scope>
    <scope>INDUCTION</scope>
    <scope>DISRUPTION PHENOTYPE</scope>
</reference>
<dbReference type="EMBL" id="AL844508">
    <property type="protein sequence ID" value="CAD51737.1"/>
    <property type="molecule type" value="Genomic_DNA"/>
</dbReference>
<dbReference type="RefSeq" id="XP_001351926.1">
    <property type="nucleotide sequence ID" value="XM_001351890.1"/>
</dbReference>
<dbReference type="STRING" id="36329.Q8I397"/>
<dbReference type="TCDB" id="2.A.29.5.9">
    <property type="family name" value="the mitochondrial carrier (mc) family"/>
</dbReference>
<dbReference type="PaxDb" id="5833-PFI0255c"/>
<dbReference type="EnsemblProtists" id="CAD51737">
    <property type="protein sequence ID" value="CAD51737"/>
    <property type="gene ID" value="PF3D7_0905200"/>
</dbReference>
<dbReference type="GeneID" id="813331"/>
<dbReference type="KEGG" id="pfa:PF3D7_0905200"/>
<dbReference type="VEuPathDB" id="PlasmoDB:PF3D7_0905200"/>
<dbReference type="HOGENOM" id="CLU_280680_0_0_1"/>
<dbReference type="InParanoid" id="Q8I397"/>
<dbReference type="OMA" id="YFEYFCG"/>
<dbReference type="OrthoDB" id="43906at2759"/>
<dbReference type="PhylomeDB" id="Q8I397"/>
<dbReference type="Proteomes" id="UP000001450">
    <property type="component" value="Chromosome 9"/>
</dbReference>
<dbReference type="GO" id="GO:0005743">
    <property type="term" value="C:mitochondrial inner membrane"/>
    <property type="evidence" value="ECO:0007669"/>
    <property type="project" value="UniProtKB-SubCell"/>
</dbReference>
<dbReference type="GO" id="GO:0031966">
    <property type="term" value="C:mitochondrial membrane"/>
    <property type="evidence" value="ECO:0000318"/>
    <property type="project" value="GO_Central"/>
</dbReference>
<dbReference type="GO" id="GO:0015093">
    <property type="term" value="F:ferrous iron transmembrane transporter activity"/>
    <property type="evidence" value="ECO:0000318"/>
    <property type="project" value="GO_Central"/>
</dbReference>
<dbReference type="GO" id="GO:0048250">
    <property type="term" value="P:iron import into the mitochondrion"/>
    <property type="evidence" value="ECO:0000318"/>
    <property type="project" value="GO_Central"/>
</dbReference>
<dbReference type="Gene3D" id="1.50.40.10">
    <property type="entry name" value="Mitochondrial carrier domain"/>
    <property type="match status" value="3"/>
</dbReference>
<dbReference type="InterPro" id="IPR018108">
    <property type="entry name" value="Mitochondrial_sb/sol_carrier"/>
</dbReference>
<dbReference type="InterPro" id="IPR023395">
    <property type="entry name" value="Mt_carrier_dom_sf"/>
</dbReference>
<dbReference type="PANTHER" id="PTHR45758:SF4">
    <property type="entry name" value="MITOFERRIN-1"/>
    <property type="match status" value="1"/>
</dbReference>
<dbReference type="PANTHER" id="PTHR45758">
    <property type="entry name" value="MITOFERRIN-1-RELATED"/>
    <property type="match status" value="1"/>
</dbReference>
<dbReference type="Pfam" id="PF00153">
    <property type="entry name" value="Mito_carr"/>
    <property type="match status" value="4"/>
</dbReference>
<dbReference type="SUPFAM" id="SSF103506">
    <property type="entry name" value="Mitochondrial carrier"/>
    <property type="match status" value="3"/>
</dbReference>
<dbReference type="PROSITE" id="PS50920">
    <property type="entry name" value="SOLCAR"/>
    <property type="match status" value="2"/>
</dbReference>
<evidence type="ECO:0000255" key="1"/>
<evidence type="ECO:0000255" key="2">
    <source>
        <dbReference type="PROSITE-ProRule" id="PRU00282"/>
    </source>
</evidence>
<evidence type="ECO:0000255" key="3">
    <source>
        <dbReference type="PROSITE-ProRule" id="PRU00498"/>
    </source>
</evidence>
<evidence type="ECO:0000269" key="4">
    <source>
    </source>
</evidence>
<evidence type="ECO:0000303" key="5">
    <source>
    </source>
</evidence>
<evidence type="ECO:0000305" key="6"/>
<evidence type="ECO:0000312" key="7">
    <source>
        <dbReference type="EMBL" id="CAD51737.1"/>
    </source>
</evidence>
<evidence type="ECO:0000312" key="8">
    <source>
        <dbReference type="Proteomes" id="UP000001450"/>
    </source>
</evidence>
<comment type="function">
    <text evidence="5">Putative iron transporter.</text>
</comment>
<comment type="subcellular location">
    <subcellularLocation>
        <location evidence="4">Mitochondrion membrane</location>
        <topology evidence="1">Multi-pass membrane protein</topology>
    </subcellularLocation>
</comment>
<comment type="developmental stage">
    <text evidence="4">Expressed in blood stages (at protein level).</text>
</comment>
<comment type="induction">
    <text evidence="4">Expression is modulated by the levels of iron ions in the environment.</text>
</comment>
<comment type="disruption phenotype">
    <text evidence="4">Attemps to generate a knockout failed.</text>
</comment>
<comment type="similarity">
    <text evidence="6">Belongs to the mitochondrial carrier (TC 2.A.29) family.</text>
</comment>
<feature type="chain" id="PRO_0000462406" description="Putative mitoferrin">
    <location>
        <begin position="1"/>
        <end position="1199"/>
    </location>
</feature>
<feature type="transmembrane region" description="Helical" evidence="1">
    <location>
        <begin position="32"/>
        <end position="52"/>
    </location>
</feature>
<feature type="transmembrane region" description="Helical" evidence="1">
    <location>
        <begin position="730"/>
        <end position="750"/>
    </location>
</feature>
<feature type="transmembrane region" description="Helical" evidence="1">
    <location>
        <begin position="795"/>
        <end position="815"/>
    </location>
</feature>
<feature type="transmembrane region" description="Helical" evidence="1">
    <location>
        <begin position="845"/>
        <end position="865"/>
    </location>
</feature>
<feature type="transmembrane region" description="Helical" evidence="1">
    <location>
        <begin position="1111"/>
        <end position="1131"/>
    </location>
</feature>
<feature type="repeat" description="Solcar 1" evidence="2">
    <location>
        <begin position="792"/>
        <end position="873"/>
    </location>
</feature>
<feature type="repeat" description="Solcar 2" evidence="2">
    <location>
        <begin position="1109"/>
        <end position="1191"/>
    </location>
</feature>
<feature type="glycosylation site" description="N-linked (GlcNAc...) asparagine" evidence="3">
    <location>
        <position position="92"/>
    </location>
</feature>
<feature type="glycosylation site" description="N-linked (GlcNAc...) asparagine" evidence="3">
    <location>
        <position position="171"/>
    </location>
</feature>
<feature type="glycosylation site" description="N-linked (GlcNAc...) asparagine" evidence="3">
    <location>
        <position position="208"/>
    </location>
</feature>
<feature type="glycosylation site" description="N-linked (GlcNAc...) asparagine" evidence="3">
    <location>
        <position position="268"/>
    </location>
</feature>
<feature type="glycosylation site" description="N-linked (GlcNAc...) asparagine" evidence="3">
    <location>
        <position position="326"/>
    </location>
</feature>
<feature type="glycosylation site" description="N-linked (GlcNAc...) asparagine" evidence="3">
    <location>
        <position position="353"/>
    </location>
</feature>
<feature type="glycosylation site" description="N-linked (GlcNAc...) asparagine" evidence="3">
    <location>
        <position position="443"/>
    </location>
</feature>
<feature type="glycosylation site" description="N-linked (GlcNAc...) asparagine" evidence="3">
    <location>
        <position position="499"/>
    </location>
</feature>
<feature type="glycosylation site" description="N-linked (GlcNAc...) asparagine" evidence="3">
    <location>
        <position position="539"/>
    </location>
</feature>
<feature type="glycosylation site" description="N-linked (GlcNAc...) asparagine" evidence="3">
    <location>
        <position position="649"/>
    </location>
</feature>
<feature type="glycosylation site" description="N-linked (GlcNAc...) asparagine" evidence="3">
    <location>
        <position position="708"/>
    </location>
</feature>
<feature type="glycosylation site" description="N-linked (GlcNAc...) asparagine" evidence="3">
    <location>
        <position position="715"/>
    </location>
</feature>
<feature type="glycosylation site" description="N-linked (GlcNAc...) asparagine" evidence="3">
    <location>
        <position position="723"/>
    </location>
</feature>
<feature type="glycosylation site" description="N-linked (GlcNAc...) asparagine" evidence="3">
    <location>
        <position position="763"/>
    </location>
</feature>
<feature type="glycosylation site" description="N-linked (GlcNAc...) asparagine" evidence="3">
    <location>
        <position position="772"/>
    </location>
</feature>
<feature type="glycosylation site" description="N-linked (GlcNAc...) asparagine" evidence="3">
    <location>
        <position position="914"/>
    </location>
</feature>
<feature type="glycosylation site" description="N-linked (GlcNAc...) asparagine" evidence="3">
    <location>
        <position position="922"/>
    </location>
</feature>
<feature type="glycosylation site" description="N-linked (GlcNAc...) asparagine" evidence="3">
    <location>
        <position position="965"/>
    </location>
</feature>
<feature type="glycosylation site" description="N-linked (GlcNAc...) asparagine" evidence="3">
    <location>
        <position position="1013"/>
    </location>
</feature>
<feature type="glycosylation site" description="N-linked (GlcNAc...) asparagine" evidence="3">
    <location>
        <position position="1022"/>
    </location>
</feature>
<feature type="glycosylation site" description="N-linked (GlcNAc...) asparagine" evidence="3">
    <location>
        <position position="1041"/>
    </location>
</feature>
<feature type="glycosylation site" description="N-linked (GlcNAc...) asparagine" evidence="3">
    <location>
        <position position="1056"/>
    </location>
</feature>
<proteinExistence type="evidence at protein level"/>